<reference key="1">
    <citation type="journal article" date="2010" name="FEBS J.">
        <title>High diversity of polyketide synthase genes and the melanin biosynthesis gene cluster in Penicillium marneffei.</title>
        <authorList>
            <person name="Woo P.C."/>
            <person name="Tam E.W."/>
            <person name="Chong K.T."/>
            <person name="Cai J.J."/>
            <person name="Tung E.T."/>
            <person name="Ngan A.H."/>
            <person name="Lau S.K."/>
            <person name="Yuen K.Y."/>
        </authorList>
    </citation>
    <scope>NUCLEOTIDE SEQUENCE [GENOMIC DNA]</scope>
    <scope>IDENTIFICATION</scope>
    <scope>DOMAIN</scope>
    <source>
        <strain>PM1</strain>
    </source>
</reference>
<reference key="2">
    <citation type="journal article" date="2012" name="PLoS Negl. Trop. Dis.">
        <title>First discovery of two polyketide synthase genes for mitorubrinic acid and mitorubrinol yellow pigment biosynthesis and implications in virulence of Penicillium marneffei.</title>
        <authorList>
            <person name="Woo P.C."/>
            <person name="Lam C.W."/>
            <person name="Tam E.W."/>
            <person name="Leung C.K."/>
            <person name="Wong S.S."/>
            <person name="Lau S.K."/>
            <person name="Yuen K.Y."/>
        </authorList>
    </citation>
    <scope>FUNCTION</scope>
    <scope>DISRUPTION PHENOTYPE</scope>
    <scope>PATHWAY</scope>
</reference>
<gene>
    <name evidence="9" type="primary">pks11</name>
</gene>
<evidence type="ECO:0000250" key="1">
    <source>
        <dbReference type="UniProtKB" id="A0A0K0MCJ4"/>
    </source>
</evidence>
<evidence type="ECO:0000250" key="2">
    <source>
        <dbReference type="UniProtKB" id="A2QTE9"/>
    </source>
</evidence>
<evidence type="ECO:0000255" key="3"/>
<evidence type="ECO:0000255" key="4">
    <source>
        <dbReference type="PROSITE-ProRule" id="PRU00258"/>
    </source>
</evidence>
<evidence type="ECO:0000255" key="5">
    <source>
        <dbReference type="PROSITE-ProRule" id="PRU01348"/>
    </source>
</evidence>
<evidence type="ECO:0000255" key="6">
    <source>
        <dbReference type="PROSITE-ProRule" id="PRU01363"/>
    </source>
</evidence>
<evidence type="ECO:0000256" key="7">
    <source>
        <dbReference type="SAM" id="MobiDB-lite"/>
    </source>
</evidence>
<evidence type="ECO:0000269" key="8">
    <source>
    </source>
</evidence>
<evidence type="ECO:0000303" key="9">
    <source>
    </source>
</evidence>
<evidence type="ECO:0000303" key="10">
    <source>
    </source>
</evidence>
<evidence type="ECO:0000305" key="11">
    <source>
    </source>
</evidence>
<evidence type="ECO:0000305" key="12">
    <source>
    </source>
</evidence>
<dbReference type="EC" id="2.3.1.-" evidence="12"/>
<dbReference type="EMBL" id="HM070055">
    <property type="protein sequence ID" value="ADH01671.1"/>
    <property type="molecule type" value="Genomic_DNA"/>
</dbReference>
<dbReference type="SMR" id="D7RJN5"/>
<dbReference type="VEuPathDB" id="FungiDB:PMAA_101550"/>
<dbReference type="OrthoDB" id="329835at2759"/>
<dbReference type="GO" id="GO:0016746">
    <property type="term" value="F:acyltransferase activity"/>
    <property type="evidence" value="ECO:0007669"/>
    <property type="project" value="UniProtKB-KW"/>
</dbReference>
<dbReference type="GO" id="GO:0008168">
    <property type="term" value="F:methyltransferase activity"/>
    <property type="evidence" value="ECO:0007669"/>
    <property type="project" value="UniProtKB-KW"/>
</dbReference>
<dbReference type="GO" id="GO:0009058">
    <property type="term" value="P:biosynthetic process"/>
    <property type="evidence" value="ECO:0007669"/>
    <property type="project" value="UniProtKB-ARBA"/>
</dbReference>
<dbReference type="GO" id="GO:0032259">
    <property type="term" value="P:methylation"/>
    <property type="evidence" value="ECO:0007669"/>
    <property type="project" value="UniProtKB-KW"/>
</dbReference>
<dbReference type="CDD" id="cd00833">
    <property type="entry name" value="PKS"/>
    <property type="match status" value="1"/>
</dbReference>
<dbReference type="Gene3D" id="3.30.70.3290">
    <property type="match status" value="1"/>
</dbReference>
<dbReference type="Gene3D" id="3.40.47.10">
    <property type="match status" value="1"/>
</dbReference>
<dbReference type="Gene3D" id="1.10.1200.10">
    <property type="entry name" value="ACP-like"/>
    <property type="match status" value="1"/>
</dbReference>
<dbReference type="Gene3D" id="3.40.366.10">
    <property type="entry name" value="Malonyl-Coenzyme A Acyl Carrier Protein, domain 2"/>
    <property type="match status" value="2"/>
</dbReference>
<dbReference type="Gene3D" id="3.40.50.720">
    <property type="entry name" value="NAD(P)-binding Rossmann-like Domain"/>
    <property type="match status" value="1"/>
</dbReference>
<dbReference type="Gene3D" id="3.10.129.110">
    <property type="entry name" value="Polyketide synthase dehydratase"/>
    <property type="match status" value="1"/>
</dbReference>
<dbReference type="Gene3D" id="3.40.50.150">
    <property type="entry name" value="Vaccinia Virus protein VP39"/>
    <property type="match status" value="1"/>
</dbReference>
<dbReference type="InterPro" id="IPR001227">
    <property type="entry name" value="Ac_transferase_dom_sf"/>
</dbReference>
<dbReference type="InterPro" id="IPR036736">
    <property type="entry name" value="ACP-like_sf"/>
</dbReference>
<dbReference type="InterPro" id="IPR014043">
    <property type="entry name" value="Acyl_transferase_dom"/>
</dbReference>
<dbReference type="InterPro" id="IPR016035">
    <property type="entry name" value="Acyl_Trfase/lysoPLipase"/>
</dbReference>
<dbReference type="InterPro" id="IPR013120">
    <property type="entry name" value="Far_NAD-bd"/>
</dbReference>
<dbReference type="InterPro" id="IPR014031">
    <property type="entry name" value="Ketoacyl_synth_C"/>
</dbReference>
<dbReference type="InterPro" id="IPR014030">
    <property type="entry name" value="Ketoacyl_synth_N"/>
</dbReference>
<dbReference type="InterPro" id="IPR016036">
    <property type="entry name" value="Malonyl_transacylase_ACP-bd"/>
</dbReference>
<dbReference type="InterPro" id="IPR013217">
    <property type="entry name" value="Methyltransf_12"/>
</dbReference>
<dbReference type="InterPro" id="IPR036291">
    <property type="entry name" value="NAD(P)-bd_dom_sf"/>
</dbReference>
<dbReference type="InterPro" id="IPR020841">
    <property type="entry name" value="PKS_Beta-ketoAc_synthase_dom"/>
</dbReference>
<dbReference type="InterPro" id="IPR042104">
    <property type="entry name" value="PKS_dehydratase_sf"/>
</dbReference>
<dbReference type="InterPro" id="IPR049900">
    <property type="entry name" value="PKS_mFAS_DH"/>
</dbReference>
<dbReference type="InterPro" id="IPR050444">
    <property type="entry name" value="Polyketide_Synthase"/>
</dbReference>
<dbReference type="InterPro" id="IPR009081">
    <property type="entry name" value="PP-bd_ACP"/>
</dbReference>
<dbReference type="InterPro" id="IPR006162">
    <property type="entry name" value="Ppantetheine_attach_site"/>
</dbReference>
<dbReference type="InterPro" id="IPR029063">
    <property type="entry name" value="SAM-dependent_MTases_sf"/>
</dbReference>
<dbReference type="InterPro" id="IPR032088">
    <property type="entry name" value="SAT"/>
</dbReference>
<dbReference type="InterPro" id="IPR016039">
    <property type="entry name" value="Thiolase-like"/>
</dbReference>
<dbReference type="PANTHER" id="PTHR45681:SF6">
    <property type="entry name" value="POLYKETIDE SYNTHASE 37"/>
    <property type="match status" value="1"/>
</dbReference>
<dbReference type="PANTHER" id="PTHR45681">
    <property type="entry name" value="POLYKETIDE SYNTHASE 44-RELATED"/>
    <property type="match status" value="1"/>
</dbReference>
<dbReference type="Pfam" id="PF00698">
    <property type="entry name" value="Acyl_transf_1"/>
    <property type="match status" value="1"/>
</dbReference>
<dbReference type="Pfam" id="PF18558">
    <property type="entry name" value="HTH_51"/>
    <property type="match status" value="1"/>
</dbReference>
<dbReference type="Pfam" id="PF00109">
    <property type="entry name" value="ketoacyl-synt"/>
    <property type="match status" value="1"/>
</dbReference>
<dbReference type="Pfam" id="PF02801">
    <property type="entry name" value="Ketoacyl-synt_C"/>
    <property type="match status" value="1"/>
</dbReference>
<dbReference type="Pfam" id="PF08242">
    <property type="entry name" value="Methyltransf_12"/>
    <property type="match status" value="1"/>
</dbReference>
<dbReference type="Pfam" id="PF07993">
    <property type="entry name" value="NAD_binding_4"/>
    <property type="match status" value="1"/>
</dbReference>
<dbReference type="Pfam" id="PF00550">
    <property type="entry name" value="PP-binding"/>
    <property type="match status" value="1"/>
</dbReference>
<dbReference type="Pfam" id="PF16073">
    <property type="entry name" value="SAT"/>
    <property type="match status" value="1"/>
</dbReference>
<dbReference type="SMART" id="SM00827">
    <property type="entry name" value="PKS_AT"/>
    <property type="match status" value="1"/>
</dbReference>
<dbReference type="SMART" id="SM00825">
    <property type="entry name" value="PKS_KS"/>
    <property type="match status" value="1"/>
</dbReference>
<dbReference type="SUPFAM" id="SSF47336">
    <property type="entry name" value="ACP-like"/>
    <property type="match status" value="1"/>
</dbReference>
<dbReference type="SUPFAM" id="SSF52151">
    <property type="entry name" value="FabD/lysophospholipase-like"/>
    <property type="match status" value="1"/>
</dbReference>
<dbReference type="SUPFAM" id="SSF51735">
    <property type="entry name" value="NAD(P)-binding Rossmann-fold domains"/>
    <property type="match status" value="1"/>
</dbReference>
<dbReference type="SUPFAM" id="SSF55048">
    <property type="entry name" value="Probable ACP-binding domain of malonyl-CoA ACP transacylase"/>
    <property type="match status" value="1"/>
</dbReference>
<dbReference type="SUPFAM" id="SSF53335">
    <property type="entry name" value="S-adenosyl-L-methionine-dependent methyltransferases"/>
    <property type="match status" value="1"/>
</dbReference>
<dbReference type="SUPFAM" id="SSF53901">
    <property type="entry name" value="Thiolase-like"/>
    <property type="match status" value="1"/>
</dbReference>
<dbReference type="PROSITE" id="PS50075">
    <property type="entry name" value="CARRIER"/>
    <property type="match status" value="1"/>
</dbReference>
<dbReference type="PROSITE" id="PS52004">
    <property type="entry name" value="KS3_2"/>
    <property type="match status" value="1"/>
</dbReference>
<dbReference type="PROSITE" id="PS00012">
    <property type="entry name" value="PHOSPHOPANTETHEINE"/>
    <property type="match status" value="1"/>
</dbReference>
<dbReference type="PROSITE" id="PS52019">
    <property type="entry name" value="PKS_MFAS_DH"/>
    <property type="match status" value="1"/>
</dbReference>
<dbReference type="PROSITE" id="PS00098">
    <property type="entry name" value="THIOLASE_1"/>
    <property type="match status" value="1"/>
</dbReference>
<feature type="chain" id="PRO_0000460603" description="Non-reducing polyketide synthase pks11">
    <location>
        <begin position="1"/>
        <end position="2575"/>
    </location>
</feature>
<feature type="domain" description="Starter acyltransferase (SAT)" evidence="3">
    <location>
        <begin position="89"/>
        <end position="228"/>
    </location>
</feature>
<feature type="domain" description="Ketosynthase family 3 (KS3)" evidence="5">
    <location>
        <begin position="373"/>
        <end position="790"/>
    </location>
</feature>
<feature type="domain" description="Malonyl-CoA:ACP transacylase (MAT)" evidence="3">
    <location>
        <begin position="901"/>
        <end position="1192"/>
    </location>
</feature>
<feature type="domain" description="PKS/mFAS DH" evidence="6">
    <location>
        <begin position="1276"/>
        <end position="1586"/>
    </location>
</feature>
<feature type="domain" description="Carrier" evidence="4">
    <location>
        <begin position="1637"/>
        <end position="1711"/>
    </location>
</feature>
<feature type="domain" description="Thioester reductase (TE)" evidence="3">
    <location>
        <begin position="2204"/>
        <end position="2448"/>
    </location>
</feature>
<feature type="region of interest" description="N-terminal hotdog fold" evidence="6">
    <location>
        <begin position="1276"/>
        <end position="1409"/>
    </location>
</feature>
<feature type="region of interest" description="Product template (PT) domain" evidence="2 3">
    <location>
        <begin position="1307"/>
        <end position="1584"/>
    </location>
</feature>
<feature type="region of interest" description="C-terminal hotdog fold" evidence="6">
    <location>
        <begin position="1437"/>
        <end position="1586"/>
    </location>
</feature>
<feature type="region of interest" description="Disordered" evidence="7">
    <location>
        <begin position="1597"/>
        <end position="1636"/>
    </location>
</feature>
<feature type="region of interest" description="Disordered" evidence="7">
    <location>
        <begin position="1713"/>
        <end position="1762"/>
    </location>
</feature>
<feature type="region of interest" description="Methyltransferase domain" evidence="3">
    <location>
        <begin position="1835"/>
        <end position="2130"/>
    </location>
</feature>
<feature type="compositionally biased region" description="Polar residues" evidence="7">
    <location>
        <begin position="1597"/>
        <end position="1606"/>
    </location>
</feature>
<feature type="compositionally biased region" description="Acidic residues" evidence="7">
    <location>
        <begin position="1714"/>
        <end position="1724"/>
    </location>
</feature>
<feature type="compositionally biased region" description="Low complexity" evidence="7">
    <location>
        <begin position="1725"/>
        <end position="1746"/>
    </location>
</feature>
<feature type="compositionally biased region" description="Basic and acidic residues" evidence="7">
    <location>
        <begin position="1752"/>
        <end position="1762"/>
    </location>
</feature>
<feature type="active site" description="Nucleophile; for transacylase activity" evidence="1">
    <location>
        <position position="129"/>
    </location>
</feature>
<feature type="active site" description="Proton donor/acceptor; for transacylase activity" evidence="1">
    <location>
        <position position="247"/>
    </location>
</feature>
<feature type="active site" description="For beta-ketoacyl synthase activity" evidence="5">
    <location>
        <position position="538"/>
    </location>
</feature>
<feature type="active site" description="For beta-ketoacyl synthase activity" evidence="5">
    <location>
        <position position="673"/>
    </location>
</feature>
<feature type="active site" description="For beta-ketoacyl synthase activity" evidence="5">
    <location>
        <position position="713"/>
    </location>
</feature>
<feature type="active site" description="Proton acceptor; for dehydratase activity" evidence="6">
    <location>
        <position position="1311"/>
    </location>
</feature>
<feature type="active site" description="Proton donor; for dehydratase activity" evidence="6">
    <location>
        <position position="1493"/>
    </location>
</feature>
<feature type="modified residue" description="O-(pantetheine 4'-phosphoryl)serine" evidence="4">
    <location>
        <position position="1671"/>
    </location>
</feature>
<keyword id="KW-0012">Acyltransferase</keyword>
<keyword id="KW-0489">Methyltransferase</keyword>
<keyword id="KW-0511">Multifunctional enzyme</keyword>
<keyword id="KW-0521">NADP</keyword>
<keyword id="KW-0596">Phosphopantetheine</keyword>
<keyword id="KW-0597">Phosphoprotein</keyword>
<keyword id="KW-0808">Transferase</keyword>
<keyword id="KW-0843">Virulence</keyword>
<sequence>MRSLAQEGNRLLVFGPQALSAKGNDFRALQAKVAQLTWITHVITDLPNVWGDFVKEFPKYSLVSGETLLQKLIKWVDTGDIDLGTNNHLANIILSPLVIITHITEYLKYLQNGAPKTNHESSTETLGFCMGFLSALVVSVSNDSIDIERYGAAAIRLAMIIGGIVDAQDGLDAQGPSKSLATAWNSTKAAEELQQILVHFPEAYVSVSYDDQRATITTASKTVSTLQGQLRTAGIVANEIGLFGRFHNDWYAEDVDEIIDFVSSRPELVLPDATDLIYQTRSNSGTGLITSGKLHDHAIRTILVQHSNWYQTFKSIHDTQIKSLKTSVIAFGPEPCVPPSILREIKQNVIHASDIQAESIAPPPIVLPQQVKEDDIAVVGMSLKVAGADDTDEFWDLLCAGQSQHREVPRNRIKFDNDWREVGPKRKYFGNFLNDHDIFDQKFFKKSAREAASTDPQQRILLHVAYQALEQAGYFNSPEQDKRIGCFIGECANDYADNVACHQPNAFTATGNLKSFIAGKVSHYFGWTGTGLTLDTACSSSLVAVHLACKAILSGECNAALAGGVNMMNSALWFQNLAAASFLSPTGQCKPFDANADGYCRGEAVGVVFLKSMSAAIANGDQIIGTISSTGVSQNQNCTPIFVPNAPSLSTLFQDVIQDAQVDPKKISVVEAHGTGTQVGDPAEYDSIRRVLGGANLRSKPLAFGSVKGLVGHTEASSGLVSLIKILLMIQNKTIPPQASHESLNPHLNATADDKMEIITKKTTWDEDYRAALINNYGASGSNASAVVTEAPRLHESTTSATSFPVLDYPFHIFGKDDRAIRDYCTKLAKSLEAKGVNNLSIANLSFNICRQSNPTLDRGLVFTSRSVKELVEKLNAFQTGDVNVAATIVQPQLRPVVLCFGGQISTYVGLSKEVYENVRILARYLDQCDYACQSLGCESIFPGIFQRSPIEDTVKLQTMLFSIQYACGKSWIDSGVQPVAVVGHSFGELTSLCISGVLSLEYALKMIVGRATIIRESWGSEKGAMMAIEADQEEVQKLLAETSLPCEEAGQRAPTIACLNGPRSFTIAGSSRAIDIAGETISKNPAYSRFRFKKLNVTNAFHSTLVEPLMSDLEKVGQSLQFNEPSIHLERATEFYSSERLAARYVADHMRNPVFFNHAVQRISKKYPDAIFVEAGSNSTITNMASRALGSPVASHFQPVNITTDNGLQLLVDSTASLWKQGLMVPFWAHSRVQTYEYSPVFLPAYQFEKLRHWMEPVPPPTSSKQVVGGQAEEPKGLWSFIDYMDEKKRGARFRINTETDKYKELVSGHIIAQTAPICPATVEVDIAVEALISLYSNFATSGLQPRICNVDNQSPICIDSSRSVWLDVESQESAPNNWSWRIVSTGESSKASTVHVTGQIIFVSTDNAEWQLEFSRYERLIGHQRCVGLLNCDDADDIIQGRNIYRSFGEVVDYSAPYRGLQKLVGKGTESAGRVVKKYTGDSWLDALLSDAFSQVGGIWVNCMTDKDPGDMYIATGFEKWMRSPDITTDYKRPEAWDVFAYHQELPLEHSYLTDIFIFDSTNGKLTEVILGVNYHKVAKATMSKILARLSGLPTTSTSTNVKSSPAAAEGSSPVENGASGSGSKAKKTKSGAGQDVVNKTKGLLAEISGMGVEEISNEAQLADIGIDSLMGMELARELEGMFKCTLPSDELMNVTDFAGLVQIIKSTLGVSDDEEGSDQEGSEASSSESSTTFTPSTTATTVSDVEDNGNEKSIGKEKSVSYTGDLQLPSSTIIEAFEESRKLTDDFIANYRCADYMETVLPRQTQLCVALTVEAFEQLGCPIRSAKAGDILTRIPHDPQHQRLTNYLHKMLEEEARLIDTDGSKITRTAIAPPSKSSDAILEQLLRDFPDHEWANKLTHFAGSRLADVLKGECDGIKLIFGSDEGRRLVTGLYGDSLLNKLANVQMQDIVARVASKMPQDQGPLKILELGAGTGGTTKGMVALLAKLGVPVEYTFTDLSGSFVAAARKTFKEYPFMKYKVHDIEKSPPADLVGTQHIIIASNAMHATHNLEISTANVRKALRPDGFLMMLEMTSPVFWVDLIFGLFEGWWLFDDGREHAIGHQTLWERIMRAAGYGHIDWTDGNSPELEIQRVIIALASGPQYDRQPVAPLPQPEKQLQPAAGRKAAVDEYVRKYTEGFSLGERVERATSPSQYEQCVLITGATGSLGSHLVAHVAALPNVKTVVCLNRRSGSDANARQQKALEDRGILIDAASQSKLQVFQVTTSKPLLGLEKSDYEELLGKVTHIVHNAWPMTGKRPLSGLESQFQVMRNLIDFARDISAHRSKGSKVTLQLISSIAVVGHYPLWSGNVEVPEERMTLESVLPNGYGDAKFVCERMLEETLHKYPEQFRVMSVRPGQIAGSKVTGYWNAMEHLSFLFKSSQTLKVLPDFEGDLCWTPVDDVAGTCSDLLISDREPYLVYHIDNPVRQPWKEMIPLLAELLDIPRTNIVPFKEWVRRVRAFPGSVEWDNPAALLIDFLDDNFLRMSCGGLLLGTAKSCEHSPTLAAVGPVSVEVTKKYIQSWKNSGFLHK</sequence>
<protein>
    <recommendedName>
        <fullName evidence="9">Non-reducing polyketide synthase pks11</fullName>
        <shortName evidence="9">NR-PKS pks11</shortName>
        <ecNumber evidence="12">2.3.1.-</ecNumber>
    </recommendedName>
    <alternativeName>
        <fullName evidence="10">Mitorubrinol and mitorubrinic acid biosynthesis cluster protein pks11</fullName>
    </alternativeName>
</protein>
<accession>D7RJN5</accession>
<comment type="function">
    <text evidence="8 12">Non-reducing polyketide synthase; part of the gene cluster that mediates the biosynthesis of mitorubrinol and mitorubrinic acid, two virulence factors that improve T.marneffei intracellular survival in macrophages (PubMed:23094121). The two polyketide synthases pks12 and pks11 are probably responsible for sequential use in the biosynthesis of mitorubrinol and mitorubrinic acid. The first part of the biosynthesis is probably catalyzed by pks12, which synthesized orsellinic acid. This tetraketide is then used as a starter unit for pks11, which possesses a SAT domain, in the second part of the biosynthesis. Pks11, contains a methyltransferase domain, also served that methylates the products, using a methyl group from S-adenosylmethionine (Probable).</text>
</comment>
<comment type="cofactor">
    <cofactor evidence="3">
        <name>pantetheine 4'-phosphate</name>
        <dbReference type="ChEBI" id="CHEBI:47942"/>
    </cofactor>
    <text evidence="3">Binds 1 phosphopantetheine covalently.</text>
</comment>
<comment type="pathway">
    <text evidence="8">Secondary metabolite biosynthesis.</text>
</comment>
<comment type="domain">
    <text evidence="11">Multidomain protein; including a starter unit:ACP transacylase (SAT) that selects the starter unit, a ketosynthase (KS) that catalyzes repeated decarboxylative condensation to elongate the polyketide backbone, a malonyl-CoA:ACP transacylase (MAT) that selects and transfers the extender unit malonyl-CoA, a product template (PT) domain that controls the immediate cyclization regioselectivity of the reactive polyketide backbone, an acyl-carrier protein (ACP) that serves as the tether of the growing and completed polyketide via its phosphopantetheinyl arm, a methyltransferase domain and a reductive NADPH-binding domain that is required for NADPH-dependent product release.</text>
</comment>
<comment type="disruption phenotype">
    <text evidence="8">Leads to the loss of the yellow composed of mitorubrinic acid and mitorubrinol (PubMed:23094121). Increases the survival of mice challenged with T.marneffei and decreases decrease survival of T.marneffei in both J774 and THP1 macrophages (PubMed:23094121).</text>
</comment>
<proteinExistence type="inferred from homology"/>
<organism>
    <name type="scientific">Talaromyces marneffei</name>
    <name type="common">Penicillium marneffei</name>
    <dbReference type="NCBI Taxonomy" id="37727"/>
    <lineage>
        <taxon>Eukaryota</taxon>
        <taxon>Fungi</taxon>
        <taxon>Dikarya</taxon>
        <taxon>Ascomycota</taxon>
        <taxon>Pezizomycotina</taxon>
        <taxon>Eurotiomycetes</taxon>
        <taxon>Eurotiomycetidae</taxon>
        <taxon>Eurotiales</taxon>
        <taxon>Trichocomaceae</taxon>
        <taxon>Talaromyces</taxon>
        <taxon>Talaromyces sect. Talaromyces</taxon>
    </lineage>
</organism>
<name>PKS11_TALMA</name>